<gene>
    <name evidence="1" type="primary">pgk</name>
    <name type="ordered locus">Amuc_1418</name>
</gene>
<name>PGK_AKKM8</name>
<proteinExistence type="inferred from homology"/>
<organism>
    <name type="scientific">Akkermansia muciniphila (strain ATCC BAA-835 / DSM 22959 / JCM 33894 / BCRC 81048 / CCUG 64013 / CIP 107961 / Muc)</name>
    <dbReference type="NCBI Taxonomy" id="349741"/>
    <lineage>
        <taxon>Bacteria</taxon>
        <taxon>Pseudomonadati</taxon>
        <taxon>Verrucomicrobiota</taxon>
        <taxon>Verrucomicrobiia</taxon>
        <taxon>Verrucomicrobiales</taxon>
        <taxon>Akkermansiaceae</taxon>
        <taxon>Akkermansia</taxon>
    </lineage>
</organism>
<dbReference type="EC" id="2.7.2.3" evidence="1"/>
<dbReference type="EMBL" id="CP001071">
    <property type="protein sequence ID" value="ACD05241.1"/>
    <property type="molecule type" value="Genomic_DNA"/>
</dbReference>
<dbReference type="RefSeq" id="WP_012420456.1">
    <property type="nucleotide sequence ID" value="NZ_CP071807.1"/>
</dbReference>
<dbReference type="SMR" id="B2UKW8"/>
<dbReference type="STRING" id="349741.Amuc_1418"/>
<dbReference type="PaxDb" id="349741-Amuc_1418"/>
<dbReference type="KEGG" id="amu:Amuc_1418"/>
<dbReference type="eggNOG" id="COG0126">
    <property type="taxonomic scope" value="Bacteria"/>
</dbReference>
<dbReference type="HOGENOM" id="CLU_025427_0_2_0"/>
<dbReference type="OrthoDB" id="9808460at2"/>
<dbReference type="BioCyc" id="AMUC349741:G1GBX-1511-MONOMER"/>
<dbReference type="UniPathway" id="UPA00109">
    <property type="reaction ID" value="UER00185"/>
</dbReference>
<dbReference type="Proteomes" id="UP000001031">
    <property type="component" value="Chromosome"/>
</dbReference>
<dbReference type="GO" id="GO:0005829">
    <property type="term" value="C:cytosol"/>
    <property type="evidence" value="ECO:0007669"/>
    <property type="project" value="TreeGrafter"/>
</dbReference>
<dbReference type="GO" id="GO:0043531">
    <property type="term" value="F:ADP binding"/>
    <property type="evidence" value="ECO:0007669"/>
    <property type="project" value="TreeGrafter"/>
</dbReference>
<dbReference type="GO" id="GO:0005524">
    <property type="term" value="F:ATP binding"/>
    <property type="evidence" value="ECO:0007669"/>
    <property type="project" value="UniProtKB-KW"/>
</dbReference>
<dbReference type="GO" id="GO:0004618">
    <property type="term" value="F:phosphoglycerate kinase activity"/>
    <property type="evidence" value="ECO:0007669"/>
    <property type="project" value="UniProtKB-UniRule"/>
</dbReference>
<dbReference type="GO" id="GO:0006094">
    <property type="term" value="P:gluconeogenesis"/>
    <property type="evidence" value="ECO:0007669"/>
    <property type="project" value="TreeGrafter"/>
</dbReference>
<dbReference type="GO" id="GO:0006096">
    <property type="term" value="P:glycolytic process"/>
    <property type="evidence" value="ECO:0007669"/>
    <property type="project" value="UniProtKB-UniRule"/>
</dbReference>
<dbReference type="CDD" id="cd00318">
    <property type="entry name" value="Phosphoglycerate_kinase"/>
    <property type="match status" value="1"/>
</dbReference>
<dbReference type="FunFam" id="3.40.50.1260:FF:000003">
    <property type="entry name" value="Phosphoglycerate kinase"/>
    <property type="match status" value="1"/>
</dbReference>
<dbReference type="FunFam" id="3.40.50.1260:FF:000006">
    <property type="entry name" value="Phosphoglycerate kinase"/>
    <property type="match status" value="1"/>
</dbReference>
<dbReference type="Gene3D" id="3.40.50.1260">
    <property type="entry name" value="Phosphoglycerate kinase, N-terminal domain"/>
    <property type="match status" value="2"/>
</dbReference>
<dbReference type="HAMAP" id="MF_00145">
    <property type="entry name" value="Phosphoglyc_kinase"/>
    <property type="match status" value="1"/>
</dbReference>
<dbReference type="InterPro" id="IPR001576">
    <property type="entry name" value="Phosphoglycerate_kinase"/>
</dbReference>
<dbReference type="InterPro" id="IPR015824">
    <property type="entry name" value="Phosphoglycerate_kinase_N"/>
</dbReference>
<dbReference type="InterPro" id="IPR036043">
    <property type="entry name" value="Phosphoglycerate_kinase_sf"/>
</dbReference>
<dbReference type="PANTHER" id="PTHR11406">
    <property type="entry name" value="PHOSPHOGLYCERATE KINASE"/>
    <property type="match status" value="1"/>
</dbReference>
<dbReference type="PANTHER" id="PTHR11406:SF23">
    <property type="entry name" value="PHOSPHOGLYCERATE KINASE 1, CHLOROPLASTIC-RELATED"/>
    <property type="match status" value="1"/>
</dbReference>
<dbReference type="Pfam" id="PF00162">
    <property type="entry name" value="PGK"/>
    <property type="match status" value="1"/>
</dbReference>
<dbReference type="PIRSF" id="PIRSF000724">
    <property type="entry name" value="Pgk"/>
    <property type="match status" value="1"/>
</dbReference>
<dbReference type="PRINTS" id="PR00477">
    <property type="entry name" value="PHGLYCKINASE"/>
</dbReference>
<dbReference type="SUPFAM" id="SSF53748">
    <property type="entry name" value="Phosphoglycerate kinase"/>
    <property type="match status" value="1"/>
</dbReference>
<evidence type="ECO:0000255" key="1">
    <source>
        <dbReference type="HAMAP-Rule" id="MF_00145"/>
    </source>
</evidence>
<reference key="1">
    <citation type="journal article" date="2011" name="PLoS ONE">
        <title>The genome of Akkermansia muciniphila, a dedicated intestinal mucin degrader, and its use in exploring intestinal metagenomes.</title>
        <authorList>
            <person name="van Passel M.W."/>
            <person name="Kant R."/>
            <person name="Zoetendal E.G."/>
            <person name="Plugge C.M."/>
            <person name="Derrien M."/>
            <person name="Malfatti S.A."/>
            <person name="Chain P.S."/>
            <person name="Woyke T."/>
            <person name="Palva A."/>
            <person name="de Vos W.M."/>
            <person name="Smidt H."/>
        </authorList>
    </citation>
    <scope>NUCLEOTIDE SEQUENCE [LARGE SCALE GENOMIC DNA]</scope>
    <source>
        <strain>ATCC BAA-835 / DSM 22959 / JCM 33894 / BCRC 81048 / CCUG 64013 / CIP 107961 / Muc</strain>
    </source>
</reference>
<comment type="catalytic activity">
    <reaction evidence="1">
        <text>(2R)-3-phosphoglycerate + ATP = (2R)-3-phospho-glyceroyl phosphate + ADP</text>
        <dbReference type="Rhea" id="RHEA:14801"/>
        <dbReference type="ChEBI" id="CHEBI:30616"/>
        <dbReference type="ChEBI" id="CHEBI:57604"/>
        <dbReference type="ChEBI" id="CHEBI:58272"/>
        <dbReference type="ChEBI" id="CHEBI:456216"/>
        <dbReference type="EC" id="2.7.2.3"/>
    </reaction>
</comment>
<comment type="pathway">
    <text evidence="1">Carbohydrate degradation; glycolysis; pyruvate from D-glyceraldehyde 3-phosphate: step 2/5.</text>
</comment>
<comment type="subunit">
    <text evidence="1">Monomer.</text>
</comment>
<comment type="subcellular location">
    <subcellularLocation>
        <location evidence="1">Cytoplasm</location>
    </subcellularLocation>
</comment>
<comment type="similarity">
    <text evidence="1">Belongs to the phosphoglycerate kinase family.</text>
</comment>
<accession>B2UKW8</accession>
<feature type="chain" id="PRO_1000096318" description="Phosphoglycerate kinase">
    <location>
        <begin position="1"/>
        <end position="403"/>
    </location>
</feature>
<feature type="binding site" evidence="1">
    <location>
        <begin position="21"/>
        <end position="23"/>
    </location>
    <ligand>
        <name>substrate</name>
    </ligand>
</feature>
<feature type="binding site" evidence="1">
    <location>
        <position position="36"/>
    </location>
    <ligand>
        <name>substrate</name>
    </ligand>
</feature>
<feature type="binding site" evidence="1">
    <location>
        <begin position="59"/>
        <end position="62"/>
    </location>
    <ligand>
        <name>substrate</name>
    </ligand>
</feature>
<feature type="binding site" evidence="1">
    <location>
        <position position="118"/>
    </location>
    <ligand>
        <name>substrate</name>
    </ligand>
</feature>
<feature type="binding site" evidence="1">
    <location>
        <position position="151"/>
    </location>
    <ligand>
        <name>substrate</name>
    </ligand>
</feature>
<feature type="binding site" evidence="1">
    <location>
        <position position="202"/>
    </location>
    <ligand>
        <name>ATP</name>
        <dbReference type="ChEBI" id="CHEBI:30616"/>
    </ligand>
</feature>
<feature type="binding site" evidence="1">
    <location>
        <position position="328"/>
    </location>
    <ligand>
        <name>ATP</name>
        <dbReference type="ChEBI" id="CHEBI:30616"/>
    </ligand>
</feature>
<feature type="binding site" evidence="1">
    <location>
        <begin position="354"/>
        <end position="357"/>
    </location>
    <ligand>
        <name>ATP</name>
        <dbReference type="ChEBI" id="CHEBI:30616"/>
    </ligand>
</feature>
<sequence>MAKLTVRDLDAKGKEVLMRVDFNVPLKDGEITNDARIVAALPTIKFLLDQGARLVLTSHLGRPKNEPDPAFSLKPVAARLSELLGKDVKFVSAAIGPEAEAARAAMKDGDVVLLENVRFYPGEKKNDPEFAKSLLGNATLFVNDAFGTAHRAHASTEGVTHFAEKSAMGFLIERELEYLEGKLENPEKPFVVIMGGAKVSDKIEVLSKLMEKADTFLIGGAMANTFLAAEGYDLGASKIEGDKLDLAREILAAAKAKGVKFLLPADVRVAMKFEDGAETFCTAPFAEGGKVPEGGMAIDIGDKAIEEFSAIIKDAKTVLWNGPMGVFEMDCFAKGTKEVAEALADSTAISIVGGGDSVTAAKKFKVQDKLSFCSTGGGASLELLEGKVLPGVGALTDKCCCGK</sequence>
<keyword id="KW-0067">ATP-binding</keyword>
<keyword id="KW-0963">Cytoplasm</keyword>
<keyword id="KW-0324">Glycolysis</keyword>
<keyword id="KW-0418">Kinase</keyword>
<keyword id="KW-0547">Nucleotide-binding</keyword>
<keyword id="KW-1185">Reference proteome</keyword>
<keyword id="KW-0808">Transferase</keyword>
<protein>
    <recommendedName>
        <fullName evidence="1">Phosphoglycerate kinase</fullName>
        <ecNumber evidence="1">2.7.2.3</ecNumber>
    </recommendedName>
</protein>